<proteinExistence type="inferred from homology"/>
<organism>
    <name type="scientific">Leifsonia xyli subsp. xyli (strain CTCB07)</name>
    <dbReference type="NCBI Taxonomy" id="281090"/>
    <lineage>
        <taxon>Bacteria</taxon>
        <taxon>Bacillati</taxon>
        <taxon>Actinomycetota</taxon>
        <taxon>Actinomycetes</taxon>
        <taxon>Micrococcales</taxon>
        <taxon>Microbacteriaceae</taxon>
        <taxon>Leifsonia</taxon>
    </lineage>
</organism>
<protein>
    <recommendedName>
        <fullName evidence="1">Dephospho-CoA kinase</fullName>
        <ecNumber evidence="1">2.7.1.24</ecNumber>
    </recommendedName>
    <alternativeName>
        <fullName evidence="1">Dephosphocoenzyme A kinase</fullName>
    </alternativeName>
</protein>
<gene>
    <name evidence="1" type="primary">coaE</name>
    <name type="ordered locus">Lxx11440</name>
</gene>
<feature type="chain" id="PRO_0000172954" description="Dephospho-CoA kinase">
    <location>
        <begin position="1"/>
        <end position="198"/>
    </location>
</feature>
<feature type="domain" description="DPCK" evidence="1">
    <location>
        <begin position="3"/>
        <end position="198"/>
    </location>
</feature>
<feature type="binding site" evidence="1">
    <location>
        <begin position="11"/>
        <end position="16"/>
    </location>
    <ligand>
        <name>ATP</name>
        <dbReference type="ChEBI" id="CHEBI:30616"/>
    </ligand>
</feature>
<sequence length="198" mass="20822">MQLIGLTGGIASGKSTIASRLAELGAAVVDADRIAREVVEPGTPALAEIRRAFGDGVIAPDGTLDRPELGAIVFGDPAALRILNGITHPAVLRESTARFEAAAVADPDAIVVYDVPLLVESANRYPFDLVVVAHADAATRARRLFELRGMDPVAAERRIGSQVSDAERLSAADLVIDTGGTLEETYRQVDALWAGLRG</sequence>
<comment type="function">
    <text evidence="1">Catalyzes the phosphorylation of the 3'-hydroxyl group of dephosphocoenzyme A to form coenzyme A.</text>
</comment>
<comment type="catalytic activity">
    <reaction evidence="1">
        <text>3'-dephospho-CoA + ATP = ADP + CoA + H(+)</text>
        <dbReference type="Rhea" id="RHEA:18245"/>
        <dbReference type="ChEBI" id="CHEBI:15378"/>
        <dbReference type="ChEBI" id="CHEBI:30616"/>
        <dbReference type="ChEBI" id="CHEBI:57287"/>
        <dbReference type="ChEBI" id="CHEBI:57328"/>
        <dbReference type="ChEBI" id="CHEBI:456216"/>
        <dbReference type="EC" id="2.7.1.24"/>
    </reaction>
</comment>
<comment type="pathway">
    <text evidence="1">Cofactor biosynthesis; coenzyme A biosynthesis; CoA from (R)-pantothenate: step 5/5.</text>
</comment>
<comment type="subcellular location">
    <subcellularLocation>
        <location evidence="1">Cytoplasm</location>
    </subcellularLocation>
</comment>
<comment type="similarity">
    <text evidence="1">Belongs to the CoaE family.</text>
</comment>
<name>COAE_LEIXX</name>
<accession>Q6AF53</accession>
<dbReference type="EC" id="2.7.1.24" evidence="1"/>
<dbReference type="EMBL" id="AE016822">
    <property type="protein sequence ID" value="AAT88992.1"/>
    <property type="molecule type" value="Genomic_DNA"/>
</dbReference>
<dbReference type="RefSeq" id="WP_011185988.1">
    <property type="nucleotide sequence ID" value="NC_006087.1"/>
</dbReference>
<dbReference type="SMR" id="Q6AF53"/>
<dbReference type="STRING" id="281090.Lxx11440"/>
<dbReference type="KEGG" id="lxx:Lxx11440"/>
<dbReference type="eggNOG" id="COG0237">
    <property type="taxonomic scope" value="Bacteria"/>
</dbReference>
<dbReference type="HOGENOM" id="CLU_057180_1_1_11"/>
<dbReference type="UniPathway" id="UPA00241">
    <property type="reaction ID" value="UER00356"/>
</dbReference>
<dbReference type="Proteomes" id="UP000001306">
    <property type="component" value="Chromosome"/>
</dbReference>
<dbReference type="GO" id="GO:0005737">
    <property type="term" value="C:cytoplasm"/>
    <property type="evidence" value="ECO:0007669"/>
    <property type="project" value="UniProtKB-SubCell"/>
</dbReference>
<dbReference type="GO" id="GO:0005524">
    <property type="term" value="F:ATP binding"/>
    <property type="evidence" value="ECO:0007669"/>
    <property type="project" value="UniProtKB-UniRule"/>
</dbReference>
<dbReference type="GO" id="GO:0004140">
    <property type="term" value="F:dephospho-CoA kinase activity"/>
    <property type="evidence" value="ECO:0007669"/>
    <property type="project" value="UniProtKB-UniRule"/>
</dbReference>
<dbReference type="GO" id="GO:0015937">
    <property type="term" value="P:coenzyme A biosynthetic process"/>
    <property type="evidence" value="ECO:0007669"/>
    <property type="project" value="UniProtKB-UniRule"/>
</dbReference>
<dbReference type="CDD" id="cd02022">
    <property type="entry name" value="DPCK"/>
    <property type="match status" value="1"/>
</dbReference>
<dbReference type="Gene3D" id="3.40.50.300">
    <property type="entry name" value="P-loop containing nucleotide triphosphate hydrolases"/>
    <property type="match status" value="1"/>
</dbReference>
<dbReference type="HAMAP" id="MF_00376">
    <property type="entry name" value="Dephospho_CoA_kinase"/>
    <property type="match status" value="1"/>
</dbReference>
<dbReference type="InterPro" id="IPR001977">
    <property type="entry name" value="Depp_CoAkinase"/>
</dbReference>
<dbReference type="InterPro" id="IPR027417">
    <property type="entry name" value="P-loop_NTPase"/>
</dbReference>
<dbReference type="NCBIfam" id="TIGR00152">
    <property type="entry name" value="dephospho-CoA kinase"/>
    <property type="match status" value="1"/>
</dbReference>
<dbReference type="NCBIfam" id="NF002879">
    <property type="entry name" value="PRK03333.1"/>
    <property type="match status" value="1"/>
</dbReference>
<dbReference type="PANTHER" id="PTHR10695:SF46">
    <property type="entry name" value="BIFUNCTIONAL COENZYME A SYNTHASE-RELATED"/>
    <property type="match status" value="1"/>
</dbReference>
<dbReference type="PANTHER" id="PTHR10695">
    <property type="entry name" value="DEPHOSPHO-COA KINASE-RELATED"/>
    <property type="match status" value="1"/>
</dbReference>
<dbReference type="Pfam" id="PF01121">
    <property type="entry name" value="CoaE"/>
    <property type="match status" value="1"/>
</dbReference>
<dbReference type="SUPFAM" id="SSF52540">
    <property type="entry name" value="P-loop containing nucleoside triphosphate hydrolases"/>
    <property type="match status" value="1"/>
</dbReference>
<dbReference type="PROSITE" id="PS51219">
    <property type="entry name" value="DPCK"/>
    <property type="match status" value="1"/>
</dbReference>
<reference key="1">
    <citation type="journal article" date="2004" name="Mol. Plant Microbe Interact.">
        <title>The genome sequence of the Gram-positive sugarcane pathogen Leifsonia xyli subsp. xyli.</title>
        <authorList>
            <person name="Monteiro-Vitorello C.B."/>
            <person name="Camargo L.E.A."/>
            <person name="Van Sluys M.A."/>
            <person name="Kitajima J.P."/>
            <person name="Truffi D."/>
            <person name="do Amaral A.M."/>
            <person name="Harakava R."/>
            <person name="de Oliveira J.C.F."/>
            <person name="Wood D."/>
            <person name="de Oliveira M.C."/>
            <person name="Miyaki C.Y."/>
            <person name="Takita M.A."/>
            <person name="da Silva A.C.R."/>
            <person name="Furlan L.R."/>
            <person name="Carraro D.M."/>
            <person name="Camarotte G."/>
            <person name="Almeida N.F. Jr."/>
            <person name="Carrer H."/>
            <person name="Coutinho L.L."/>
            <person name="El-Dorry H.A."/>
            <person name="Ferro M.I.T."/>
            <person name="Gagliardi P.R."/>
            <person name="Giglioti E."/>
            <person name="Goldman M.H.S."/>
            <person name="Goldman G.H."/>
            <person name="Kimura E.T."/>
            <person name="Ferro E.S."/>
            <person name="Kuramae E.E."/>
            <person name="Lemos E.G.M."/>
            <person name="Lemos M.V.F."/>
            <person name="Mauro S.M.Z."/>
            <person name="Machado M.A."/>
            <person name="Marino C.L."/>
            <person name="Menck C.F."/>
            <person name="Nunes L.R."/>
            <person name="Oliveira R.C."/>
            <person name="Pereira G.G."/>
            <person name="Siqueira W."/>
            <person name="de Souza A.A."/>
            <person name="Tsai S.M."/>
            <person name="Zanca A.S."/>
            <person name="Simpson A.J.G."/>
            <person name="Brumbley S.M."/>
            <person name="Setubal J.C."/>
        </authorList>
    </citation>
    <scope>NUCLEOTIDE SEQUENCE [LARGE SCALE GENOMIC DNA]</scope>
    <source>
        <strain>CTCB07</strain>
    </source>
</reference>
<keyword id="KW-0067">ATP-binding</keyword>
<keyword id="KW-0173">Coenzyme A biosynthesis</keyword>
<keyword id="KW-0963">Cytoplasm</keyword>
<keyword id="KW-0418">Kinase</keyword>
<keyword id="KW-0547">Nucleotide-binding</keyword>
<keyword id="KW-1185">Reference proteome</keyword>
<keyword id="KW-0808">Transferase</keyword>
<evidence type="ECO:0000255" key="1">
    <source>
        <dbReference type="HAMAP-Rule" id="MF_00376"/>
    </source>
</evidence>